<keyword id="KW-0456">Lyase</keyword>
<keyword id="KW-0472">Membrane</keyword>
<keyword id="KW-0479">Metal-binding</keyword>
<keyword id="KW-0496">Mitochondrion</keyword>
<keyword id="KW-0999">Mitochondrion inner membrane</keyword>
<keyword id="KW-1185">Reference proteome</keyword>
<keyword id="KW-0809">Transit peptide</keyword>
<keyword id="KW-0831">Ubiquinone biosynthesis</keyword>
<keyword id="KW-0862">Zinc</keyword>
<evidence type="ECO:0000255" key="1">
    <source>
        <dbReference type="HAMAP-Rule" id="MF_03111"/>
    </source>
</evidence>
<evidence type="ECO:0000256" key="2">
    <source>
        <dbReference type="SAM" id="MobiDB-lite"/>
    </source>
</evidence>
<gene>
    <name type="ORF">AAEL014646</name>
</gene>
<protein>
    <recommendedName>
        <fullName evidence="1">Ubiquinone biosynthesis protein COQ4 homolog, mitochondrial</fullName>
    </recommendedName>
    <alternativeName>
        <fullName>4-hydroxy-3-methoxy-5-polyprenylbenzoate decarboxylase</fullName>
        <ecNumber evidence="1">4.1.1.130</ecNumber>
    </alternativeName>
    <alternativeName>
        <fullName evidence="1">Coenzyme Q biosynthesis protein 4 homolog</fullName>
    </alternativeName>
</protein>
<comment type="function">
    <text evidence="1">Lyase that catalyzes the C1-decarboxylation of 4-hydroxy-3-methoxy-5-(all-trans-polyprenyl)benzoic acid into 2-methoxy-6-(all-trans-polyprenyl)phenol during ubiquinone biosynthesis.</text>
</comment>
<comment type="catalytic activity">
    <reaction evidence="1">
        <text>a 4-hydroxy-3-methoxy-5-(all-trans-polyprenyl)benzoate + H(+) = a 2-methoxy-6-(all-trans-polyprenyl)phenol + CO2</text>
        <dbReference type="Rhea" id="RHEA:81179"/>
        <dbReference type="Rhea" id="RHEA-COMP:9551"/>
        <dbReference type="Rhea" id="RHEA-COMP:10931"/>
        <dbReference type="ChEBI" id="CHEBI:15378"/>
        <dbReference type="ChEBI" id="CHEBI:16526"/>
        <dbReference type="ChEBI" id="CHEBI:62731"/>
        <dbReference type="ChEBI" id="CHEBI:84443"/>
        <dbReference type="EC" id="4.1.1.130"/>
    </reaction>
</comment>
<comment type="cofactor">
    <cofactor evidence="1">
        <name>Zn(2+)</name>
        <dbReference type="ChEBI" id="CHEBI:29105"/>
    </cofactor>
</comment>
<comment type="pathway">
    <text evidence="1">Cofactor biosynthesis; ubiquinone biosynthesis.</text>
</comment>
<comment type="subunit">
    <text evidence="1">Component of a multi-subunit COQ enzyme complex.</text>
</comment>
<comment type="subcellular location">
    <subcellularLocation>
        <location evidence="1">Mitochondrion inner membrane</location>
        <topology evidence="1">Peripheral membrane protein</topology>
        <orientation evidence="1">Matrix side</orientation>
    </subcellularLocation>
</comment>
<comment type="similarity">
    <text evidence="1">Belongs to the COQ4 family.</text>
</comment>
<name>COQ4_AEDAE</name>
<organism>
    <name type="scientific">Aedes aegypti</name>
    <name type="common">Yellowfever mosquito</name>
    <name type="synonym">Culex aegypti</name>
    <dbReference type="NCBI Taxonomy" id="7159"/>
    <lineage>
        <taxon>Eukaryota</taxon>
        <taxon>Metazoa</taxon>
        <taxon>Ecdysozoa</taxon>
        <taxon>Arthropoda</taxon>
        <taxon>Hexapoda</taxon>
        <taxon>Insecta</taxon>
        <taxon>Pterygota</taxon>
        <taxon>Neoptera</taxon>
        <taxon>Endopterygota</taxon>
        <taxon>Diptera</taxon>
        <taxon>Nematocera</taxon>
        <taxon>Culicoidea</taxon>
        <taxon>Culicidae</taxon>
        <taxon>Culicinae</taxon>
        <taxon>Aedini</taxon>
        <taxon>Aedes</taxon>
        <taxon>Stegomyia</taxon>
    </lineage>
</organism>
<reference key="1">
    <citation type="journal article" date="2007" name="Science">
        <title>Genome sequence of Aedes aegypti, a major arbovirus vector.</title>
        <authorList>
            <person name="Nene V."/>
            <person name="Wortman J.R."/>
            <person name="Lawson D."/>
            <person name="Haas B.J."/>
            <person name="Kodira C.D."/>
            <person name="Tu Z.J."/>
            <person name="Loftus B.J."/>
            <person name="Xi Z."/>
            <person name="Megy K."/>
            <person name="Grabherr M."/>
            <person name="Ren Q."/>
            <person name="Zdobnov E.M."/>
            <person name="Lobo N.F."/>
            <person name="Campbell K.S."/>
            <person name="Brown S.E."/>
            <person name="Bonaldo M.F."/>
            <person name="Zhu J."/>
            <person name="Sinkins S.P."/>
            <person name="Hogenkamp D.G."/>
            <person name="Amedeo P."/>
            <person name="Arensburger P."/>
            <person name="Atkinson P.W."/>
            <person name="Bidwell S.L."/>
            <person name="Biedler J."/>
            <person name="Birney E."/>
            <person name="Bruggner R.V."/>
            <person name="Costas J."/>
            <person name="Coy M.R."/>
            <person name="Crabtree J."/>
            <person name="Crawford M."/>
            <person name="DeBruyn B."/>
            <person name="DeCaprio D."/>
            <person name="Eiglmeier K."/>
            <person name="Eisenstadt E."/>
            <person name="El-Dorry H."/>
            <person name="Gelbart W.M."/>
            <person name="Gomes S.L."/>
            <person name="Hammond M."/>
            <person name="Hannick L.I."/>
            <person name="Hogan J.R."/>
            <person name="Holmes M.H."/>
            <person name="Jaffe D."/>
            <person name="Johnston S.J."/>
            <person name="Kennedy R.C."/>
            <person name="Koo H."/>
            <person name="Kravitz S."/>
            <person name="Kriventseva E.V."/>
            <person name="Kulp D."/>
            <person name="Labutti K."/>
            <person name="Lee E."/>
            <person name="Li S."/>
            <person name="Lovin D.D."/>
            <person name="Mao C."/>
            <person name="Mauceli E."/>
            <person name="Menck C.F."/>
            <person name="Miller J.R."/>
            <person name="Montgomery P."/>
            <person name="Mori A."/>
            <person name="Nascimento A.L."/>
            <person name="Naveira H.F."/>
            <person name="Nusbaum C."/>
            <person name="O'Leary S.B."/>
            <person name="Orvis J."/>
            <person name="Pertea M."/>
            <person name="Quesneville H."/>
            <person name="Reidenbach K.R."/>
            <person name="Rogers Y.-H.C."/>
            <person name="Roth C.W."/>
            <person name="Schneider J.R."/>
            <person name="Schatz M."/>
            <person name="Shumway M."/>
            <person name="Stanke M."/>
            <person name="Stinson E.O."/>
            <person name="Tubio J.M.C."/>
            <person name="Vanzee J.P."/>
            <person name="Verjovski-Almeida S."/>
            <person name="Werner D."/>
            <person name="White O.R."/>
            <person name="Wyder S."/>
            <person name="Zeng Q."/>
            <person name="Zhao Q."/>
            <person name="Zhao Y."/>
            <person name="Hill C.A."/>
            <person name="Raikhel A.S."/>
            <person name="Soares M.B."/>
            <person name="Knudson D.L."/>
            <person name="Lee N.H."/>
            <person name="Galagan J."/>
            <person name="Salzberg S.L."/>
            <person name="Paulsen I.T."/>
            <person name="Dimopoulos G."/>
            <person name="Collins F.H."/>
            <person name="Bruce B."/>
            <person name="Fraser-Liggett C.M."/>
            <person name="Severson D.W."/>
        </authorList>
    </citation>
    <scope>NUCLEOTIDE SEQUENCE [LARGE SCALE GENOMIC DNA]</scope>
    <source>
        <strain>LVPib12</strain>
    </source>
</reference>
<proteinExistence type="inferred from homology"/>
<sequence>MLRQTAFRSMKLNRTPGRYFTTAENMDTGSSQSPPDTEQKMQPMDEFTKEFLKNQIKLTELQRVILSAGSSIAALVDPRRHDMIACLGETTGVPALENIRDQMRNSDEGRQILEDKPRINTRTVNMDALKKLPENTFGYQYVSFMEKYEITPDSRMEVKFMDDPELAYVMTRYRETHDLVHTVFGMPTNMLGEVAIKWVEAINIGLPMCYGGAIFGAFRLRPKQRQNYLQRYLPWALRAGQRARPLMCVYWEKRWEQDIEELRKELNIEVLKVD</sequence>
<feature type="transit peptide" description="Mitochondrion" evidence="1">
    <location>
        <begin position="1"/>
        <end position="20"/>
    </location>
</feature>
<feature type="chain" id="PRO_0000388056" description="Ubiquinone biosynthesis protein COQ4 homolog, mitochondrial">
    <location>
        <begin position="21"/>
        <end position="274"/>
    </location>
</feature>
<feature type="region of interest" description="Disordered" evidence="2">
    <location>
        <begin position="13"/>
        <end position="40"/>
    </location>
</feature>
<feature type="compositionally biased region" description="Polar residues" evidence="2">
    <location>
        <begin position="22"/>
        <end position="36"/>
    </location>
</feature>
<feature type="binding site" evidence="1">
    <location>
        <position position="177"/>
    </location>
    <ligand>
        <name>Zn(2+)</name>
        <dbReference type="ChEBI" id="CHEBI:29105"/>
    </ligand>
</feature>
<feature type="binding site" evidence="1">
    <location>
        <position position="178"/>
    </location>
    <ligand>
        <name>Zn(2+)</name>
        <dbReference type="ChEBI" id="CHEBI:29105"/>
    </ligand>
</feature>
<feature type="binding site" evidence="1">
    <location>
        <position position="181"/>
    </location>
    <ligand>
        <name>Zn(2+)</name>
        <dbReference type="ChEBI" id="CHEBI:29105"/>
    </ligand>
</feature>
<feature type="binding site" evidence="1">
    <location>
        <position position="193"/>
    </location>
    <ligand>
        <name>Zn(2+)</name>
        <dbReference type="ChEBI" id="CHEBI:29105"/>
    </ligand>
</feature>
<accession>Q16FT5</accession>
<dbReference type="EC" id="4.1.1.130" evidence="1"/>
<dbReference type="EMBL" id="CH478382">
    <property type="protein sequence ID" value="EAT33100.1"/>
    <property type="molecule type" value="Genomic_DNA"/>
</dbReference>
<dbReference type="RefSeq" id="XP_001649247.1">
    <property type="nucleotide sequence ID" value="XM_001649197.1"/>
</dbReference>
<dbReference type="SMR" id="Q16FT5"/>
<dbReference type="FunCoup" id="Q16FT5">
    <property type="interactions" value="688"/>
</dbReference>
<dbReference type="STRING" id="7159.Q16FT5"/>
<dbReference type="PaxDb" id="7159-AAEL014646-PA"/>
<dbReference type="GeneID" id="5564899"/>
<dbReference type="KEGG" id="aag:5564899"/>
<dbReference type="VEuPathDB" id="VectorBase:AAEL014646"/>
<dbReference type="eggNOG" id="KOG3244">
    <property type="taxonomic scope" value="Eukaryota"/>
</dbReference>
<dbReference type="HOGENOM" id="CLU_061241_1_1_1"/>
<dbReference type="InParanoid" id="Q16FT5"/>
<dbReference type="OMA" id="YYERHFH"/>
<dbReference type="PhylomeDB" id="Q16FT5"/>
<dbReference type="UniPathway" id="UPA00232"/>
<dbReference type="Proteomes" id="UP000008820">
    <property type="component" value="Unassembled WGS sequence"/>
</dbReference>
<dbReference type="Proteomes" id="UP000682892">
    <property type="component" value="Unassembled WGS sequence"/>
</dbReference>
<dbReference type="GO" id="GO:0031314">
    <property type="term" value="C:extrinsic component of mitochondrial inner membrane"/>
    <property type="evidence" value="ECO:0007669"/>
    <property type="project" value="UniProtKB-UniRule"/>
</dbReference>
<dbReference type="GO" id="GO:0006744">
    <property type="term" value="P:ubiquinone biosynthetic process"/>
    <property type="evidence" value="ECO:0007669"/>
    <property type="project" value="UniProtKB-UniRule"/>
</dbReference>
<dbReference type="HAMAP" id="MF_03111">
    <property type="entry name" value="Coq4"/>
    <property type="match status" value="1"/>
</dbReference>
<dbReference type="InterPro" id="IPR007715">
    <property type="entry name" value="Coq4"/>
</dbReference>
<dbReference type="InterPro" id="IPR027540">
    <property type="entry name" value="Coq4_euk"/>
</dbReference>
<dbReference type="PANTHER" id="PTHR12922">
    <property type="entry name" value="UBIQUINONE BIOSYNTHESIS PROTEIN"/>
    <property type="match status" value="1"/>
</dbReference>
<dbReference type="PANTHER" id="PTHR12922:SF7">
    <property type="entry name" value="UBIQUINONE BIOSYNTHESIS PROTEIN COQ4 HOMOLOG, MITOCHONDRIAL"/>
    <property type="match status" value="1"/>
</dbReference>
<dbReference type="Pfam" id="PF05019">
    <property type="entry name" value="Coq4"/>
    <property type="match status" value="1"/>
</dbReference>